<gene>
    <name type="primary">PIN1</name>
    <name type="ORF">QtsA-18773</name>
</gene>
<dbReference type="EC" id="5.2.1.8" evidence="1"/>
<dbReference type="EMBL" id="AB179383">
    <property type="protein sequence ID" value="BAE02434.1"/>
    <property type="molecule type" value="mRNA"/>
</dbReference>
<dbReference type="RefSeq" id="NP_001270625.1">
    <property type="nucleotide sequence ID" value="NM_001283696.1"/>
</dbReference>
<dbReference type="BMRB" id="Q4R383"/>
<dbReference type="SMR" id="Q4R383"/>
<dbReference type="STRING" id="9541.ENSMFAP00000042034"/>
<dbReference type="eggNOG" id="KOG3259">
    <property type="taxonomic scope" value="Eukaryota"/>
</dbReference>
<dbReference type="Proteomes" id="UP000233100">
    <property type="component" value="Unplaced"/>
</dbReference>
<dbReference type="GO" id="GO:0005737">
    <property type="term" value="C:cytoplasm"/>
    <property type="evidence" value="ECO:0000250"/>
    <property type="project" value="UniProtKB"/>
</dbReference>
<dbReference type="GO" id="GO:0005829">
    <property type="term" value="C:cytosol"/>
    <property type="evidence" value="ECO:0007669"/>
    <property type="project" value="TreeGrafter"/>
</dbReference>
<dbReference type="GO" id="GO:0016607">
    <property type="term" value="C:nuclear speck"/>
    <property type="evidence" value="ECO:0007669"/>
    <property type="project" value="UniProtKB-SubCell"/>
</dbReference>
<dbReference type="GO" id="GO:0005634">
    <property type="term" value="C:nucleus"/>
    <property type="evidence" value="ECO:0000250"/>
    <property type="project" value="UniProtKB"/>
</dbReference>
<dbReference type="GO" id="GO:0016859">
    <property type="term" value="F:cis-trans isomerase activity"/>
    <property type="evidence" value="ECO:0000250"/>
    <property type="project" value="UniProtKB"/>
</dbReference>
<dbReference type="GO" id="GO:0003755">
    <property type="term" value="F:peptidyl-prolyl cis-trans isomerase activity"/>
    <property type="evidence" value="ECO:0000250"/>
    <property type="project" value="UniProtKB"/>
</dbReference>
<dbReference type="GO" id="GO:1902430">
    <property type="term" value="P:negative regulation of amyloid-beta formation"/>
    <property type="evidence" value="ECO:0000250"/>
    <property type="project" value="UniProtKB"/>
</dbReference>
<dbReference type="GO" id="GO:0000413">
    <property type="term" value="P:protein peptidyl-prolyl isomerization"/>
    <property type="evidence" value="ECO:0000250"/>
    <property type="project" value="UniProtKB"/>
</dbReference>
<dbReference type="GO" id="GO:0031647">
    <property type="term" value="P:regulation of protein stability"/>
    <property type="evidence" value="ECO:0000250"/>
    <property type="project" value="UniProtKB"/>
</dbReference>
<dbReference type="GO" id="GO:0001666">
    <property type="term" value="P:response to hypoxia"/>
    <property type="evidence" value="ECO:0000250"/>
    <property type="project" value="UniProtKB"/>
</dbReference>
<dbReference type="CDD" id="cd00201">
    <property type="entry name" value="WW"/>
    <property type="match status" value="1"/>
</dbReference>
<dbReference type="FunFam" id="2.20.70.10:FF:000046">
    <property type="entry name" value="Peptidyl-prolyl cis-trans isomerase"/>
    <property type="match status" value="1"/>
</dbReference>
<dbReference type="FunFam" id="3.10.50.40:FF:000010">
    <property type="entry name" value="Peptidyl-prolyl cis-trans isomerase Pin1"/>
    <property type="match status" value="1"/>
</dbReference>
<dbReference type="Gene3D" id="2.20.70.10">
    <property type="match status" value="1"/>
</dbReference>
<dbReference type="Gene3D" id="3.10.50.40">
    <property type="match status" value="1"/>
</dbReference>
<dbReference type="InterPro" id="IPR046357">
    <property type="entry name" value="PPIase_dom_sf"/>
</dbReference>
<dbReference type="InterPro" id="IPR051370">
    <property type="entry name" value="PPIase_Pin1"/>
</dbReference>
<dbReference type="InterPro" id="IPR000297">
    <property type="entry name" value="PPIase_PpiC"/>
</dbReference>
<dbReference type="InterPro" id="IPR023058">
    <property type="entry name" value="PPIase_PpiC_CS"/>
</dbReference>
<dbReference type="InterPro" id="IPR001202">
    <property type="entry name" value="WW_dom"/>
</dbReference>
<dbReference type="InterPro" id="IPR036020">
    <property type="entry name" value="WW_dom_sf"/>
</dbReference>
<dbReference type="PANTHER" id="PTHR10657">
    <property type="entry name" value="PEPTIDYL-PROLYL CIS-TRANS ISOMERASE"/>
    <property type="match status" value="1"/>
</dbReference>
<dbReference type="PANTHER" id="PTHR10657:SF4">
    <property type="entry name" value="PEPTIDYL-PROLYL CIS-TRANS ISOMERASE-RELATED"/>
    <property type="match status" value="1"/>
</dbReference>
<dbReference type="Pfam" id="PF00639">
    <property type="entry name" value="Rotamase"/>
    <property type="match status" value="1"/>
</dbReference>
<dbReference type="Pfam" id="PF00397">
    <property type="entry name" value="WW"/>
    <property type="match status" value="1"/>
</dbReference>
<dbReference type="SMART" id="SM00456">
    <property type="entry name" value="WW"/>
    <property type="match status" value="1"/>
</dbReference>
<dbReference type="SUPFAM" id="SSF54534">
    <property type="entry name" value="FKBP-like"/>
    <property type="match status" value="1"/>
</dbReference>
<dbReference type="SUPFAM" id="SSF51045">
    <property type="entry name" value="WW domain"/>
    <property type="match status" value="1"/>
</dbReference>
<dbReference type="PROSITE" id="PS01096">
    <property type="entry name" value="PPIC_PPIASE_1"/>
    <property type="match status" value="1"/>
</dbReference>
<dbReference type="PROSITE" id="PS50198">
    <property type="entry name" value="PPIC_PPIASE_2"/>
    <property type="match status" value="1"/>
</dbReference>
<dbReference type="PROSITE" id="PS01159">
    <property type="entry name" value="WW_DOMAIN_1"/>
    <property type="match status" value="1"/>
</dbReference>
<dbReference type="PROSITE" id="PS50020">
    <property type="entry name" value="WW_DOMAIN_2"/>
    <property type="match status" value="1"/>
</dbReference>
<reference key="1">
    <citation type="submission" date="2005-06" db="EMBL/GenBank/DDBJ databases">
        <title>DNA sequences of macaque genes expressed in brain or testis and its evolutionary implications.</title>
        <authorList>
            <consortium name="International consortium for macaque cDNA sequencing and analysis"/>
        </authorList>
    </citation>
    <scope>NUCLEOTIDE SEQUENCE [LARGE SCALE MRNA]</scope>
    <source>
        <tissue>Testis</tissue>
    </source>
</reference>
<protein>
    <recommendedName>
        <fullName>Peptidyl-prolyl cis-trans isomerase NIMA-interacting 1</fullName>
        <ecNumber evidence="1">5.2.1.8</ecNumber>
    </recommendedName>
    <alternativeName>
        <fullName>Peptidyl-prolyl cis-trans isomerase Pin1</fullName>
        <shortName>PPIase Pin1</shortName>
    </alternativeName>
</protein>
<organism>
    <name type="scientific">Macaca fascicularis</name>
    <name type="common">Crab-eating macaque</name>
    <name type="synonym">Cynomolgus monkey</name>
    <dbReference type="NCBI Taxonomy" id="9541"/>
    <lineage>
        <taxon>Eukaryota</taxon>
        <taxon>Metazoa</taxon>
        <taxon>Chordata</taxon>
        <taxon>Craniata</taxon>
        <taxon>Vertebrata</taxon>
        <taxon>Euteleostomi</taxon>
        <taxon>Mammalia</taxon>
        <taxon>Eutheria</taxon>
        <taxon>Euarchontoglires</taxon>
        <taxon>Primates</taxon>
        <taxon>Haplorrhini</taxon>
        <taxon>Catarrhini</taxon>
        <taxon>Cercopithecidae</taxon>
        <taxon>Cercopithecinae</taxon>
        <taxon>Macaca</taxon>
    </lineage>
</organism>
<proteinExistence type="evidence at transcript level"/>
<comment type="function">
    <text evidence="1">Peptidyl-prolyl cis/trans isomerase (PPIase) that binds to and isomerizes specific phosphorylated Ser/Thr-Pro (pSer/Thr-Pro) motifs. By inducing conformational changes in a subset of phosphorylated proteins, acts as a molecular switch in multiple cellular processes. Displays a preference for acidic residues located N-terminally to the proline bond to be isomerized. Regulates mitosis presumably by interacting with NIMA and attenuating its mitosis-promoting activity. Down-regulates kinase activity of BTK. Can transactivate multiple oncogenes and induce centrosome amplification, chromosome instability and cell transformation. Required for the efficient dephosphorylation and recycling of RAF1 after mitogen activation. Binds and targets PML and BCL6 for degradation in a phosphorylation-dependent manner. Acts as a regulator of JNK cascade by binding to phosphorylated FBXW7, disrupting FBXW7 dimerization and promoting FBXW7 autoubiquitination and degradation: degradation of FBXW7 leads to subsequent stabilization of JUN. May facilitate the ubiquitination and proteasomal degradation of RBBP8/CtIP through CUL3/KLHL15 E3 ubiquitin-protein ligase complex, hence favors DNA double-strand repair through error-prone non-homologous end joining (NHEJ) over error-free, RBBP8-mediated homologous recombination (HR). Upon IL33-induced lung inflammation, catalyzes cis-trans isomerization of phosphorylated IRAK3/IRAK-M, inducing IRAK3 stabilization, nuclear translocation and expression of pro-inflammatory genes in dendritic cells. Catalyzes cis-trans isomerization of phosphorylated phosphoglycerate kinase PGK1 under hypoxic conditions to promote its binding to the TOM complex and targeting to the mitochondrion (By similarity).</text>
</comment>
<comment type="catalytic activity">
    <reaction evidence="1">
        <text>[protein]-peptidylproline (omega=180) = [protein]-peptidylproline (omega=0)</text>
        <dbReference type="Rhea" id="RHEA:16237"/>
        <dbReference type="Rhea" id="RHEA-COMP:10747"/>
        <dbReference type="Rhea" id="RHEA-COMP:10748"/>
        <dbReference type="ChEBI" id="CHEBI:83833"/>
        <dbReference type="ChEBI" id="CHEBI:83834"/>
        <dbReference type="EC" id="5.2.1.8"/>
    </reaction>
</comment>
<comment type="subunit">
    <text evidence="1 2">Interacts with STIL (By similarity). Interacts with KIF20B. Interacts with NEK6. Interacts (via WW domain) with PRKX. Interacts with BTK. Interacts (via PpiC domain) with DAPK1. Interacts with the phosphorylated form of RAF1. Interacts (via WW domain) with ATCAY; upon NGF stimulation. Interacts with PML (isoform PML-4). Interacts with BCL6. Interacts with FBXW7, disrupting FBXW7 dimerization and promoting FBXW7 autoubiquitination and degradation. Directly interacts with RBBP8/CtIP; this interaction depends upon RBBP8 phosphorylation. Interacts (via WW domain) with IRAK3/IRAK-M (when phosphorylated at 'Ser-110') in response to IL33-mediated (but not TLR4 ligand LPS) dendritic cell stimulation (By similarity). Interacts with PGK1 (when phosphorylated at 'Ser-203'); the interaction is direct, occurs under hypoxic conditions, and targets PGK1 to the mitochondrion by promoting interactions with the TOM complex (By similarity).</text>
</comment>
<comment type="subcellular location">
    <subcellularLocation>
        <location evidence="1">Nucleus</location>
    </subcellularLocation>
    <subcellularLocation>
        <location evidence="1">Nucleus speckle</location>
    </subcellularLocation>
    <subcellularLocation>
        <location evidence="1">Cytoplasm</location>
    </subcellularLocation>
    <text evidence="1">Colocalizes with NEK6 in the nucleus. Mainly localized in the nucleus but phosphorylation at Ser-71 by DAPK1 results in inhibition of its nuclear localization.</text>
</comment>
<comment type="domain">
    <text evidence="1">The WW domain is required for the interaction with STIL and KIF20B.</text>
</comment>
<comment type="PTM">
    <text evidence="1 2">Phosphorylation at Ser-71 by DAPK1 results in inhibition of its catalytic activity, nuclear localization, and its ability to induce centrosome amplification, chromosome instability and cell transformation (By similarity). Ser-71 is dephosphorylated upon IL33-stimulation of dendritic cells (By similarity).</text>
</comment>
<accession>Q4R383</accession>
<sequence length="163" mass="18301">MADEEKLPPGWEKRMSRSSDRVYYFNHITNASQWERPSGNSSSGGKNGQGEPARVRCSHLLVKHSQSRRPSSWRQEKITRTKEEALELINGYIQKIKSGEEDFESLASQFSDCSSAKARGDLGAFSRGQMQKPFEDASFALRTGEMSGPVFTDSGIHIILRTE</sequence>
<name>PIN1_MACFA</name>
<keyword id="KW-0007">Acetylation</keyword>
<keyword id="KW-0131">Cell cycle</keyword>
<keyword id="KW-0963">Cytoplasm</keyword>
<keyword id="KW-0413">Isomerase</keyword>
<keyword id="KW-0539">Nucleus</keyword>
<keyword id="KW-0597">Phosphoprotein</keyword>
<keyword id="KW-1185">Reference proteome</keyword>
<keyword id="KW-0697">Rotamase</keyword>
<feature type="chain" id="PRO_0000236244" description="Peptidyl-prolyl cis-trans isomerase NIMA-interacting 1">
    <location>
        <begin position="1"/>
        <end position="163"/>
    </location>
</feature>
<feature type="domain" description="WW" evidence="3">
    <location>
        <begin position="5"/>
        <end position="39"/>
    </location>
</feature>
<feature type="domain" description="PpiC" evidence="4">
    <location>
        <begin position="52"/>
        <end position="163"/>
    </location>
</feature>
<feature type="region of interest" description="Disordered" evidence="5">
    <location>
        <begin position="33"/>
        <end position="54"/>
    </location>
</feature>
<feature type="modified residue" description="Phosphoserine" evidence="1">
    <location>
        <position position="43"/>
    </location>
</feature>
<feature type="modified residue" description="N6-acetyllysine" evidence="1">
    <location>
        <position position="46"/>
    </location>
</feature>
<feature type="modified residue" description="Phosphoserine; by DAPK1" evidence="1">
    <location>
        <position position="71"/>
    </location>
</feature>
<feature type="modified residue" description="Phosphoserine" evidence="1">
    <location>
        <position position="108"/>
    </location>
</feature>
<evidence type="ECO:0000250" key="1">
    <source>
        <dbReference type="UniProtKB" id="Q13526"/>
    </source>
</evidence>
<evidence type="ECO:0000250" key="2">
    <source>
        <dbReference type="UniProtKB" id="Q9QUR7"/>
    </source>
</evidence>
<evidence type="ECO:0000255" key="3">
    <source>
        <dbReference type="PROSITE-ProRule" id="PRU00224"/>
    </source>
</evidence>
<evidence type="ECO:0000255" key="4">
    <source>
        <dbReference type="PROSITE-ProRule" id="PRU00278"/>
    </source>
</evidence>
<evidence type="ECO:0000256" key="5">
    <source>
        <dbReference type="SAM" id="MobiDB-lite"/>
    </source>
</evidence>